<accession>F4IEM5</accession>
<accession>Q9C929</accession>
<comment type="function">
    <text evidence="1 2 3 4">May play a role in abscisic acid (ABA) signaling.</text>
</comment>
<comment type="subunit">
    <text evidence="8">May interact (via C-terminus) with GPA1.</text>
</comment>
<comment type="interaction">
    <interactant intactId="EBI-1804974">
        <id>F4IEM5</id>
    </interactant>
    <interactant intactId="EBI-443890">
        <id>P18064</id>
        <label>GPA1</label>
    </interactant>
    <organismsDiffer>false</organismsDiffer>
    <experiments>5</experiments>
</comment>
<comment type="disruption phenotype">
    <text evidence="1 2 3">No visible phenotype under normal growth conditions. However, in growth conditions described in PubMed:17347412 mutant plants have decreased sensitivity to abscisic acid (ABA).</text>
</comment>
<comment type="similarity">
    <text evidence="5">Belongs to the LanC-like protein family.</text>
</comment>
<comment type="caution">
    <text evidence="6 7">Was originally described as a plasma membrane G-protein coupled receptor (GPCR) that binds ABA. Binding of ABA to GCR2 results in the release of G protein and dissociation of the heterotrimeric complex to activate downstream ABA effectors and to trigger the ABA responses (PubMed:17347412). However, GCR2 has been controversial with respect to the reproducibility of the results (PubMed:17894782, PubMed:18714360, PubMed:19286934). Moreover, GCR2 lacks the prototypical seven transmembrane domains of GPCRs, and is homologous to mammalian lanthionine synthetase C-like (LANCL) proteins (PubMed:17991845). Intriguingly, it was shown that human granulocytes and insulin-producing rat insulinoma cells release ABA, and that LANCL2 is necessary for ABA binding and signaling in these cells (PubMed:19667068).</text>
</comment>
<comment type="sequence caution" evidence="5">
    <conflict type="erroneous initiation">
        <sequence resource="EMBL-CDS" id="AAG52264"/>
    </conflict>
    <text>Truncated N-terminus.</text>
</comment>
<dbReference type="EMBL" id="AC019018">
    <property type="protein sequence ID" value="AAG52264.1"/>
    <property type="status" value="ALT_INIT"/>
    <property type="molecule type" value="Genomic_DNA"/>
</dbReference>
<dbReference type="EMBL" id="CP002684">
    <property type="protein sequence ID" value="AEE32868.1"/>
    <property type="molecule type" value="Genomic_DNA"/>
</dbReference>
<dbReference type="PIR" id="E96570">
    <property type="entry name" value="E96570"/>
</dbReference>
<dbReference type="RefSeq" id="NP_175700.2">
    <property type="nucleotide sequence ID" value="NM_104170.3"/>
</dbReference>
<dbReference type="PDB" id="3T33">
    <property type="method" value="X-ray"/>
    <property type="resolution" value="2.25 A"/>
    <property type="chains" value="A=1-410"/>
</dbReference>
<dbReference type="PDBsum" id="3T33"/>
<dbReference type="SMR" id="F4IEM5"/>
<dbReference type="BioGRID" id="26950">
    <property type="interactions" value="1"/>
</dbReference>
<dbReference type="FunCoup" id="F4IEM5">
    <property type="interactions" value="1742"/>
</dbReference>
<dbReference type="IntAct" id="F4IEM5">
    <property type="interactions" value="1"/>
</dbReference>
<dbReference type="STRING" id="3702.F4IEM5"/>
<dbReference type="iPTMnet" id="F4IEM5"/>
<dbReference type="PaxDb" id="3702-AT1G52920.1"/>
<dbReference type="ProteomicsDB" id="222175"/>
<dbReference type="EnsemblPlants" id="AT1G52920.1">
    <property type="protein sequence ID" value="AT1G52920.1"/>
    <property type="gene ID" value="AT1G52920"/>
</dbReference>
<dbReference type="GeneID" id="841725"/>
<dbReference type="Gramene" id="AT1G52920.1">
    <property type="protein sequence ID" value="AT1G52920.1"/>
    <property type="gene ID" value="AT1G52920"/>
</dbReference>
<dbReference type="KEGG" id="ath:AT1G52920"/>
<dbReference type="Araport" id="AT1G52920"/>
<dbReference type="TAIR" id="AT1G52920">
    <property type="gene designation" value="GPCR"/>
</dbReference>
<dbReference type="eggNOG" id="KOG2787">
    <property type="taxonomic scope" value="Eukaryota"/>
</dbReference>
<dbReference type="HOGENOM" id="CLU_036244_0_1_1"/>
<dbReference type="InParanoid" id="F4IEM5"/>
<dbReference type="OMA" id="LSLYFEW"/>
<dbReference type="EvolutionaryTrace" id="F4IEM5"/>
<dbReference type="PRO" id="PR:F4IEM5"/>
<dbReference type="Proteomes" id="UP000006548">
    <property type="component" value="Chromosome 1"/>
</dbReference>
<dbReference type="ExpressionAtlas" id="F4IEM5">
    <property type="expression patterns" value="baseline and differential"/>
</dbReference>
<dbReference type="GO" id="GO:0019898">
    <property type="term" value="C:extrinsic component of membrane"/>
    <property type="evidence" value="ECO:0000250"/>
    <property type="project" value="TAIR"/>
</dbReference>
<dbReference type="GO" id="GO:0005886">
    <property type="term" value="C:plasma membrane"/>
    <property type="evidence" value="ECO:0000314"/>
    <property type="project" value="TAIR"/>
</dbReference>
<dbReference type="GO" id="GO:0010427">
    <property type="term" value="F:abscisic acid binding"/>
    <property type="evidence" value="ECO:0000314"/>
    <property type="project" value="TAIR"/>
</dbReference>
<dbReference type="GO" id="GO:0046872">
    <property type="term" value="F:metal ion binding"/>
    <property type="evidence" value="ECO:0007669"/>
    <property type="project" value="UniProtKB-KW"/>
</dbReference>
<dbReference type="GO" id="GO:0009738">
    <property type="term" value="P:abscisic acid-activated signaling pathway"/>
    <property type="evidence" value="ECO:0007669"/>
    <property type="project" value="UniProtKB-KW"/>
</dbReference>
<dbReference type="GO" id="GO:0005975">
    <property type="term" value="P:carbohydrate metabolic process"/>
    <property type="evidence" value="ECO:0007669"/>
    <property type="project" value="InterPro"/>
</dbReference>
<dbReference type="GO" id="GO:0010231">
    <property type="term" value="P:maintenance of seed dormancy"/>
    <property type="evidence" value="ECO:0000315"/>
    <property type="project" value="TAIR"/>
</dbReference>
<dbReference type="GO" id="GO:0031179">
    <property type="term" value="P:peptide modification"/>
    <property type="evidence" value="ECO:0007669"/>
    <property type="project" value="InterPro"/>
</dbReference>
<dbReference type="GO" id="GO:0009787">
    <property type="term" value="P:regulation of abscisic acid-activated signaling pathway"/>
    <property type="evidence" value="ECO:0000315"/>
    <property type="project" value="TAIR"/>
</dbReference>
<dbReference type="CDD" id="cd04794">
    <property type="entry name" value="euk_LANCL"/>
    <property type="match status" value="1"/>
</dbReference>
<dbReference type="FunFam" id="1.50.10.10:FF:000035">
    <property type="entry name" value="LanC-like protein 2"/>
    <property type="match status" value="1"/>
</dbReference>
<dbReference type="Gene3D" id="1.50.10.10">
    <property type="match status" value="1"/>
</dbReference>
<dbReference type="InterPro" id="IPR012341">
    <property type="entry name" value="6hp_glycosidase-like_sf"/>
</dbReference>
<dbReference type="InterPro" id="IPR007822">
    <property type="entry name" value="LANC-like"/>
</dbReference>
<dbReference type="InterPro" id="IPR020464">
    <property type="entry name" value="LanC-like_prot_euk"/>
</dbReference>
<dbReference type="PANTHER" id="PTHR12736">
    <property type="entry name" value="LANC-LIKE PROTEIN"/>
    <property type="match status" value="1"/>
</dbReference>
<dbReference type="PANTHER" id="PTHR12736:SF7">
    <property type="entry name" value="LANC-LIKE PROTEIN 3"/>
    <property type="match status" value="1"/>
</dbReference>
<dbReference type="Pfam" id="PF05147">
    <property type="entry name" value="LANC_like"/>
    <property type="match status" value="1"/>
</dbReference>
<dbReference type="PRINTS" id="PR01951">
    <property type="entry name" value="LANCEUKARYTE"/>
</dbReference>
<dbReference type="PRINTS" id="PR01950">
    <property type="entry name" value="LANCSUPER"/>
</dbReference>
<dbReference type="SMART" id="SM01260">
    <property type="entry name" value="LANC_like"/>
    <property type="match status" value="1"/>
</dbReference>
<dbReference type="SUPFAM" id="SSF158745">
    <property type="entry name" value="LanC-like"/>
    <property type="match status" value="1"/>
</dbReference>
<proteinExistence type="evidence at protein level"/>
<organism>
    <name type="scientific">Arabidopsis thaliana</name>
    <name type="common">Mouse-ear cress</name>
    <dbReference type="NCBI Taxonomy" id="3702"/>
    <lineage>
        <taxon>Eukaryota</taxon>
        <taxon>Viridiplantae</taxon>
        <taxon>Streptophyta</taxon>
        <taxon>Embryophyta</taxon>
        <taxon>Tracheophyta</taxon>
        <taxon>Spermatophyta</taxon>
        <taxon>Magnoliopsida</taxon>
        <taxon>eudicotyledons</taxon>
        <taxon>Gunneridae</taxon>
        <taxon>Pentapetalae</taxon>
        <taxon>rosids</taxon>
        <taxon>malvids</taxon>
        <taxon>Brassicales</taxon>
        <taxon>Brassicaceae</taxon>
        <taxon>Camelineae</taxon>
        <taxon>Arabidopsis</taxon>
    </lineage>
</organism>
<name>GCR2_ARATH</name>
<protein>
    <recommendedName>
        <fullName>LanC-like protein GCR2</fullName>
    </recommendedName>
    <alternativeName>
        <fullName>G-protein coupled receptor 2</fullName>
    </alternativeName>
</protein>
<feature type="chain" id="PRO_0000424627" description="LanC-like protein GCR2">
    <location>
        <begin position="1"/>
        <end position="410"/>
    </location>
</feature>
<feature type="binding site">
    <location>
        <position position="283"/>
    </location>
    <ligand>
        <name>Zn(2+)</name>
        <dbReference type="ChEBI" id="CHEBI:29105"/>
    </ligand>
</feature>
<feature type="binding site">
    <location>
        <position position="328"/>
    </location>
    <ligand>
        <name>Zn(2+)</name>
        <dbReference type="ChEBI" id="CHEBI:29105"/>
    </ligand>
</feature>
<feature type="binding site">
    <location>
        <position position="329"/>
    </location>
    <ligand>
        <name>Zn(2+)</name>
        <dbReference type="ChEBI" id="CHEBI:29105"/>
    </ligand>
</feature>
<feature type="helix" evidence="9">
    <location>
        <begin position="31"/>
        <end position="37"/>
    </location>
</feature>
<feature type="helix" evidence="9">
    <location>
        <begin position="40"/>
        <end position="62"/>
    </location>
</feature>
<feature type="turn" evidence="9">
    <location>
        <begin position="63"/>
        <end position="68"/>
    </location>
</feature>
<feature type="strand" evidence="9">
    <location>
        <begin position="74"/>
        <end position="78"/>
    </location>
</feature>
<feature type="helix" evidence="9">
    <location>
        <begin position="79"/>
        <end position="93"/>
    </location>
</feature>
<feature type="helix" evidence="9">
    <location>
        <begin position="96"/>
        <end position="113"/>
    </location>
</feature>
<feature type="turn" evidence="9">
    <location>
        <begin position="121"/>
        <end position="123"/>
    </location>
</feature>
<feature type="helix" evidence="9">
    <location>
        <begin position="125"/>
        <end position="139"/>
    </location>
</feature>
<feature type="helix" evidence="9">
    <location>
        <begin position="142"/>
        <end position="153"/>
    </location>
</feature>
<feature type="turn" evidence="9">
    <location>
        <begin position="165"/>
        <end position="167"/>
    </location>
</feature>
<feature type="helix" evidence="9">
    <location>
        <begin position="169"/>
        <end position="183"/>
    </location>
</feature>
<feature type="helix" evidence="9">
    <location>
        <begin position="190"/>
        <end position="207"/>
    </location>
</feature>
<feature type="turn" evidence="9">
    <location>
        <begin position="227"/>
        <end position="229"/>
    </location>
</feature>
<feature type="helix" evidence="9">
    <location>
        <begin position="231"/>
        <end position="239"/>
    </location>
</feature>
<feature type="helix" evidence="9">
    <location>
        <begin position="245"/>
        <end position="260"/>
    </location>
</feature>
<feature type="strand" evidence="9">
    <location>
        <begin position="270"/>
        <end position="273"/>
    </location>
</feature>
<feature type="strand" evidence="9">
    <location>
        <begin position="281"/>
        <end position="285"/>
    </location>
</feature>
<feature type="helix" evidence="9">
    <location>
        <begin position="286"/>
        <end position="300"/>
    </location>
</feature>
<feature type="helix" evidence="9">
    <location>
        <begin position="303"/>
        <end position="319"/>
    </location>
</feature>
<feature type="strand" evidence="9">
    <location>
        <begin position="322"/>
        <end position="324"/>
    </location>
</feature>
<feature type="helix" evidence="9">
    <location>
        <begin position="331"/>
        <end position="345"/>
    </location>
</feature>
<feature type="helix" evidence="9">
    <location>
        <begin position="348"/>
        <end position="370"/>
    </location>
</feature>
<feature type="strand" evidence="9">
    <location>
        <begin position="373"/>
        <end position="375"/>
    </location>
</feature>
<feature type="strand" evidence="9">
    <location>
        <begin position="382"/>
        <end position="386"/>
    </location>
</feature>
<feature type="helix" evidence="9">
    <location>
        <begin position="387"/>
        <end position="397"/>
    </location>
</feature>
<feature type="helix" evidence="9">
    <location>
        <begin position="400"/>
        <end position="402"/>
    </location>
</feature>
<feature type="turn" evidence="9">
    <location>
        <begin position="406"/>
        <end position="408"/>
    </location>
</feature>
<evidence type="ECO:0000269" key="1">
    <source>
    </source>
</evidence>
<evidence type="ECO:0000269" key="2">
    <source>
    </source>
</evidence>
<evidence type="ECO:0000269" key="3">
    <source>
    </source>
</evidence>
<evidence type="ECO:0000269" key="4">
    <source>
    </source>
</evidence>
<evidence type="ECO:0000305" key="5"/>
<evidence type="ECO:0000305" key="6">
    <source>
    </source>
</evidence>
<evidence type="ECO:0000305" key="7">
    <source>
    </source>
</evidence>
<evidence type="ECO:0000305" key="8">
    <source ref="8"/>
</evidence>
<evidence type="ECO:0007829" key="9">
    <source>
        <dbReference type="PDB" id="3T33"/>
    </source>
</evidence>
<keyword id="KW-0002">3D-structure</keyword>
<keyword id="KW-0938">Abscisic acid signaling pathway</keyword>
<keyword id="KW-0479">Metal-binding</keyword>
<keyword id="KW-1185">Reference proteome</keyword>
<keyword id="KW-0862">Zinc</keyword>
<gene>
    <name type="primary">GCR2</name>
    <name type="synonym">GPCR</name>
    <name type="ordered locus">At1g52920</name>
    <name type="ORF">F14G24.19</name>
</gene>
<sequence>MGERFFRNEMPEFVPEDLSGEEETVTECKDSLTKLLSLPYKSFSEKLHRYALSIKDKVVWETWERSGKRVRDYNLYTGVLGTAYLLFKSYQVTRNEDDLKLCLENVEACDVASRDSERVTFICGYAGVCALGAVAAKCLGDDQLYDRYLARFRGIRLPSDLPYELLYGRAGYLWACLFLNKHIGQESISSERMRSVVEEIFRAGRQLGNKGTCPLMYEWHGKRYWGAAHGLAGIMNVLMHTELEPDEIKDVKGTLSYMIQNRFPSGNYLSSEGSKSDRLVHWCHGAPGVALTLVKAAQVYNTKEFVEAAMEAGEVVWSRGLLKRVGICHGISGNTYVFLSLYRLTRNPKYLYRAKAFASFLLDKSEKLISEGQMHGGDRPFSLFEGIGGMAYMLLDMNDPTQALFPGYEL</sequence>
<reference key="1">
    <citation type="journal article" date="2000" name="Nature">
        <title>Sequence and analysis of chromosome 1 of the plant Arabidopsis thaliana.</title>
        <authorList>
            <person name="Theologis A."/>
            <person name="Ecker J.R."/>
            <person name="Palm C.J."/>
            <person name="Federspiel N.A."/>
            <person name="Kaul S."/>
            <person name="White O."/>
            <person name="Alonso J."/>
            <person name="Altafi H."/>
            <person name="Araujo R."/>
            <person name="Bowman C.L."/>
            <person name="Brooks S.Y."/>
            <person name="Buehler E."/>
            <person name="Chan A."/>
            <person name="Chao Q."/>
            <person name="Chen H."/>
            <person name="Cheuk R.F."/>
            <person name="Chin C.W."/>
            <person name="Chung M.K."/>
            <person name="Conn L."/>
            <person name="Conway A.B."/>
            <person name="Conway A.R."/>
            <person name="Creasy T.H."/>
            <person name="Dewar K."/>
            <person name="Dunn P."/>
            <person name="Etgu P."/>
            <person name="Feldblyum T.V."/>
            <person name="Feng J.-D."/>
            <person name="Fong B."/>
            <person name="Fujii C.Y."/>
            <person name="Gill J.E."/>
            <person name="Goldsmith A.D."/>
            <person name="Haas B."/>
            <person name="Hansen N.F."/>
            <person name="Hughes B."/>
            <person name="Huizar L."/>
            <person name="Hunter J.L."/>
            <person name="Jenkins J."/>
            <person name="Johnson-Hopson C."/>
            <person name="Khan S."/>
            <person name="Khaykin E."/>
            <person name="Kim C.J."/>
            <person name="Koo H.L."/>
            <person name="Kremenetskaia I."/>
            <person name="Kurtz D.B."/>
            <person name="Kwan A."/>
            <person name="Lam B."/>
            <person name="Langin-Hooper S."/>
            <person name="Lee A."/>
            <person name="Lee J.M."/>
            <person name="Lenz C.A."/>
            <person name="Li J.H."/>
            <person name="Li Y.-P."/>
            <person name="Lin X."/>
            <person name="Liu S.X."/>
            <person name="Liu Z.A."/>
            <person name="Luros J.S."/>
            <person name="Maiti R."/>
            <person name="Marziali A."/>
            <person name="Militscher J."/>
            <person name="Miranda M."/>
            <person name="Nguyen M."/>
            <person name="Nierman W.C."/>
            <person name="Osborne B.I."/>
            <person name="Pai G."/>
            <person name="Peterson J."/>
            <person name="Pham P.K."/>
            <person name="Rizzo M."/>
            <person name="Rooney T."/>
            <person name="Rowley D."/>
            <person name="Sakano H."/>
            <person name="Salzberg S.L."/>
            <person name="Schwartz J.R."/>
            <person name="Shinn P."/>
            <person name="Southwick A.M."/>
            <person name="Sun H."/>
            <person name="Tallon L.J."/>
            <person name="Tambunga G."/>
            <person name="Toriumi M.J."/>
            <person name="Town C.D."/>
            <person name="Utterback T."/>
            <person name="Van Aken S."/>
            <person name="Vaysberg M."/>
            <person name="Vysotskaia V.S."/>
            <person name="Walker M."/>
            <person name="Wu D."/>
            <person name="Yu G."/>
            <person name="Fraser C.M."/>
            <person name="Venter J.C."/>
            <person name="Davis R.W."/>
        </authorList>
    </citation>
    <scope>NUCLEOTIDE SEQUENCE [LARGE SCALE GENOMIC DNA]</scope>
    <source>
        <strain>cv. Columbia</strain>
    </source>
</reference>
<reference key="2">
    <citation type="journal article" date="2017" name="Plant J.">
        <title>Araport11: a complete reannotation of the Arabidopsis thaliana reference genome.</title>
        <authorList>
            <person name="Cheng C.Y."/>
            <person name="Krishnakumar V."/>
            <person name="Chan A.P."/>
            <person name="Thibaud-Nissen F."/>
            <person name="Schobel S."/>
            <person name="Town C.D."/>
        </authorList>
    </citation>
    <scope>GENOME REANNOTATION</scope>
    <source>
        <strain>cv. Columbia</strain>
    </source>
</reference>
<reference key="3">
    <citation type="journal article" date="2007" name="Plant J.">
        <title>Genetic characterization reveals no role for the reported ABA receptor, GCR2, in ABA control of seed germination and early seedling development in Arabidopsis.</title>
        <authorList>
            <person name="Gao Y."/>
            <person name="Zeng Q."/>
            <person name="Guo J."/>
            <person name="Cheng J."/>
            <person name="Ellis B.E."/>
            <person name="Chen J.G."/>
        </authorList>
    </citation>
    <scope>FUNCTION</scope>
    <scope>DISRUPTION PHENOTYPE</scope>
</reference>
<reference key="4">
    <citation type="journal article" date="2007" name="Science">
        <title>A G protein-coupled receptor is a plasma membrane receptor for the plant hormone abscisic acid.</title>
        <authorList>
            <person name="Liu X."/>
            <person name="Yue Y."/>
            <person name="Li B."/>
            <person name="Nie Y."/>
            <person name="Li W."/>
            <person name="Wu W.H."/>
            <person name="Ma L."/>
        </authorList>
    </citation>
    <scope>FUNCTION</scope>
    <scope>INTERACTION WITH GPA1</scope>
    <scope>DISRUPTION PHENOTYPE</scope>
</reference>
<reference key="5">
    <citation type="journal article" date="2007" name="Science">
        <title>Comment on 'A G protein coupled receptor is a plasma membrane receptor for the plant hormone abscisic acid'.</title>
        <authorList>
            <person name="Johnston C.A."/>
            <person name="Temple B.R."/>
            <person name="Chen J.G."/>
            <person name="Gao Y."/>
            <person name="Moriyama E.N."/>
            <person name="Jones A.M."/>
            <person name="Siderovski D.P."/>
            <person name="Willard F.S."/>
        </authorList>
    </citation>
    <scope>COMMENT ON PUBMED:17347412 RESULTS</scope>
</reference>
<reference key="6">
    <citation type="journal article" date="2008" name="PLoS ONE">
        <title>The GCR2 gene family is not required for ABA control of seed germination and early seedling development in Arabidopsis.</title>
        <authorList>
            <person name="Guo J."/>
            <person name="Zeng Q."/>
            <person name="Emami M."/>
            <person name="Ellis B.E."/>
            <person name="Chen J.G."/>
        </authorList>
    </citation>
    <scope>FUNCTION</scope>
    <scope>DISRUPTION PHENOTYPE</scope>
</reference>
<reference key="7">
    <citation type="journal article" date="2009" name="Plant Physiol.">
        <title>Reevaluation of abscisic acid-binding assays shows that G-protein-coupled receptor2 does not bind abscisic acid.</title>
        <authorList>
            <person name="Risk J.M."/>
            <person name="Day C.L."/>
            <person name="Macknight R.C."/>
        </authorList>
    </citation>
    <scope>FUNCTION</scope>
</reference>
<reference key="8">
    <citation type="submission" date="2011-07" db="PDB data bank">
        <title>Crystal structure of Arabidopsis GCR2 identifies a novel clade of lantibiotic cyclase-like proteins.</title>
        <authorList>
            <person name="Chen J.-H."/>
            <person name="Guo J."/>
            <person name="Chen J.-G."/>
            <person name="Nair S.K."/>
        </authorList>
    </citation>
    <scope>X-RAY CRYSTALLOGRAPHY (2.25 ANGSTROMS) IN COMPLEX WITH ZINC ION</scope>
</reference>